<accession>Q4R6Y5</accession>
<proteinExistence type="evidence at transcript level"/>
<feature type="signal peptide" evidence="3">
    <location>
        <begin position="1"/>
        <end position="27"/>
    </location>
</feature>
<feature type="chain" id="PRO_0000277862" description="E3 ubiquitin-protein ligase ZNRF4">
    <location>
        <begin position="28"/>
        <end position="429"/>
    </location>
</feature>
<feature type="topological domain" description="Lumenal" evidence="7">
    <location>
        <begin position="28"/>
        <end position="250"/>
    </location>
</feature>
<feature type="transmembrane region" description="Helical" evidence="3">
    <location>
        <begin position="251"/>
        <end position="271"/>
    </location>
</feature>
<feature type="topological domain" description="Cytoplasmic" evidence="7">
    <location>
        <begin position="272"/>
        <end position="429"/>
    </location>
</feature>
<feature type="domain" description="PA" evidence="3">
    <location>
        <begin position="152"/>
        <end position="223"/>
    </location>
</feature>
<feature type="zinc finger region" description="RING-type; atypical" evidence="4">
    <location>
        <begin position="309"/>
        <end position="352"/>
    </location>
</feature>
<feature type="region of interest" description="Disordered" evidence="5">
    <location>
        <begin position="30"/>
        <end position="64"/>
    </location>
</feature>
<feature type="region of interest" description="Disordered" evidence="5">
    <location>
        <begin position="358"/>
        <end position="381"/>
    </location>
</feature>
<feature type="region of interest" description="Disordered" evidence="5">
    <location>
        <begin position="409"/>
        <end position="429"/>
    </location>
</feature>
<feature type="compositionally biased region" description="Basic residues" evidence="5">
    <location>
        <begin position="37"/>
        <end position="49"/>
    </location>
</feature>
<feature type="compositionally biased region" description="Polar residues" evidence="5">
    <location>
        <begin position="409"/>
        <end position="420"/>
    </location>
</feature>
<feature type="glycosylation site" description="N-linked (GlcNAc...) asparagine" evidence="3">
    <location>
        <position position="152"/>
    </location>
</feature>
<evidence type="ECO:0000250" key="1">
    <source>
        <dbReference type="UniProtKB" id="Q8WWF5"/>
    </source>
</evidence>
<evidence type="ECO:0000250" key="2">
    <source>
        <dbReference type="UniProtKB" id="Q9DAH2"/>
    </source>
</evidence>
<evidence type="ECO:0000255" key="3"/>
<evidence type="ECO:0000255" key="4">
    <source>
        <dbReference type="PROSITE-ProRule" id="PRU00175"/>
    </source>
</evidence>
<evidence type="ECO:0000256" key="5">
    <source>
        <dbReference type="SAM" id="MobiDB-lite"/>
    </source>
</evidence>
<evidence type="ECO:0000303" key="6">
    <source ref="1"/>
</evidence>
<evidence type="ECO:0000305" key="7"/>
<protein>
    <recommendedName>
        <fullName evidence="1">E3 ubiquitin-protein ligase ZNRF4</fullName>
        <ecNumber evidence="1">2.3.2.27</ecNumber>
    </recommendedName>
    <alternativeName>
        <fullName>RING-type E3 ubiquitin transferase ZNRF4</fullName>
    </alternativeName>
    <alternativeName>
        <fullName evidence="1">Zinc/RING finger protein 4</fullName>
    </alternativeName>
</protein>
<sequence length="429" mass="46799">MLRCRPEPLMPRATRVAVAVSLPLSHAVIPTQLPSHPGHRPSGRPRRCPKAPCLPSPVGLSSTQPAKRVTMGWPRPGQALVAVKALLVLSVLQVPAQAVVRAMLEDISSSVDFADLPALFGVPLAPEGIRGYLMEVKPANACHPVEAPRLGNRSLGAIALIRRYDCTFDLKVLNAQRAGFEAAIVHNVHSDDLVSMTHVSEDLRGQIAIPSVFVGEAASQDLRVILGCDKSAHVLLLPDDPPCRDLDCHPVLTVSWALGRTLALVVSTLFVLNRLWLWAQACCSHRRLVKTSTCQKAQVRTFTRRNDLCAICLDEYEEGDQLKILPCSHTYHCKCIDPWFSQAPRRSCPVCKQSVAGTEDSFDSTTDSFSDEDPSLPGHRPPIWAIQARLRSRRLELLGRASPHCHCSTTSLEAEDTTVSPAPPEAPGQ</sequence>
<name>ZNRF4_MACFA</name>
<dbReference type="EC" id="2.3.2.27" evidence="1"/>
<dbReference type="EMBL" id="AB169045">
    <property type="protein sequence ID" value="BAE01139.1"/>
    <property type="molecule type" value="mRNA"/>
</dbReference>
<dbReference type="RefSeq" id="NP_001270551.1">
    <property type="nucleotide sequence ID" value="NM_001283622.1"/>
</dbReference>
<dbReference type="SMR" id="Q4R6Y5"/>
<dbReference type="GlyCosmos" id="Q4R6Y5">
    <property type="glycosylation" value="1 site, No reported glycans"/>
</dbReference>
<dbReference type="eggNOG" id="KOG4628">
    <property type="taxonomic scope" value="Eukaryota"/>
</dbReference>
<dbReference type="UniPathway" id="UPA00143"/>
<dbReference type="Proteomes" id="UP000233100">
    <property type="component" value="Unplaced"/>
</dbReference>
<dbReference type="GO" id="GO:0005783">
    <property type="term" value="C:endoplasmic reticulum"/>
    <property type="evidence" value="ECO:0000250"/>
    <property type="project" value="UniProtKB"/>
</dbReference>
<dbReference type="GO" id="GO:0005789">
    <property type="term" value="C:endoplasmic reticulum membrane"/>
    <property type="evidence" value="ECO:0007669"/>
    <property type="project" value="UniProtKB-SubCell"/>
</dbReference>
<dbReference type="GO" id="GO:0061630">
    <property type="term" value="F:ubiquitin protein ligase activity"/>
    <property type="evidence" value="ECO:0000250"/>
    <property type="project" value="UniProtKB"/>
</dbReference>
<dbReference type="GO" id="GO:0008270">
    <property type="term" value="F:zinc ion binding"/>
    <property type="evidence" value="ECO:0007669"/>
    <property type="project" value="UniProtKB-KW"/>
</dbReference>
<dbReference type="GO" id="GO:0016567">
    <property type="term" value="P:protein ubiquitination"/>
    <property type="evidence" value="ECO:0007669"/>
    <property type="project" value="UniProtKB-UniPathway"/>
</dbReference>
<dbReference type="CDD" id="cd02123">
    <property type="entry name" value="PA_C_RZF_like"/>
    <property type="match status" value="1"/>
</dbReference>
<dbReference type="CDD" id="cd16665">
    <property type="entry name" value="RING-H2_RNF13-like"/>
    <property type="match status" value="1"/>
</dbReference>
<dbReference type="FunFam" id="3.50.30.30:FF:000013">
    <property type="entry name" value="E3 ubiquitin-protein ligase RNF167"/>
    <property type="match status" value="1"/>
</dbReference>
<dbReference type="FunFam" id="3.30.40.10:FF:000501">
    <property type="entry name" value="E3 ubiquitin-protein ligase ZNRF4"/>
    <property type="match status" value="1"/>
</dbReference>
<dbReference type="Gene3D" id="3.50.30.30">
    <property type="match status" value="1"/>
</dbReference>
<dbReference type="Gene3D" id="3.30.40.10">
    <property type="entry name" value="Zinc/RING finger domain, C3HC4 (zinc finger)"/>
    <property type="match status" value="1"/>
</dbReference>
<dbReference type="InterPro" id="IPR051653">
    <property type="entry name" value="E3_ligase_sorting_rcpt"/>
</dbReference>
<dbReference type="InterPro" id="IPR046450">
    <property type="entry name" value="PA_dom_sf"/>
</dbReference>
<dbReference type="InterPro" id="IPR003137">
    <property type="entry name" value="PA_domain"/>
</dbReference>
<dbReference type="InterPro" id="IPR001841">
    <property type="entry name" value="Znf_RING"/>
</dbReference>
<dbReference type="InterPro" id="IPR013083">
    <property type="entry name" value="Znf_RING/FYVE/PHD"/>
</dbReference>
<dbReference type="InterPro" id="IPR044744">
    <property type="entry name" value="ZNRF4/RNF13/RNF167_PA"/>
</dbReference>
<dbReference type="PANTHER" id="PTHR47168:SF1">
    <property type="entry name" value="OS02G0798600 PROTEIN"/>
    <property type="match status" value="1"/>
</dbReference>
<dbReference type="PANTHER" id="PTHR47168">
    <property type="entry name" value="RING ZINC FINGER DOMAIN SUPERFAMILY PROTEIN-RELATED"/>
    <property type="match status" value="1"/>
</dbReference>
<dbReference type="Pfam" id="PF02225">
    <property type="entry name" value="PA"/>
    <property type="match status" value="1"/>
</dbReference>
<dbReference type="Pfam" id="PF13639">
    <property type="entry name" value="zf-RING_2"/>
    <property type="match status" value="1"/>
</dbReference>
<dbReference type="SMART" id="SM00184">
    <property type="entry name" value="RING"/>
    <property type="match status" value="1"/>
</dbReference>
<dbReference type="SUPFAM" id="SSF52025">
    <property type="entry name" value="PA domain"/>
    <property type="match status" value="1"/>
</dbReference>
<dbReference type="SUPFAM" id="SSF57850">
    <property type="entry name" value="RING/U-box"/>
    <property type="match status" value="1"/>
</dbReference>
<dbReference type="PROSITE" id="PS50089">
    <property type="entry name" value="ZF_RING_2"/>
    <property type="match status" value="1"/>
</dbReference>
<comment type="function">
    <text evidence="1 2">E3 ubiquitin-protein ligase that acts as a negative regulator of NOD2 signaling by mediating ubiquitination and degradation of RIPK2. Also catalyzes ubiquitination and proteasomal degradation of CANX within the endoplasmic reticulum (By similarity). Could have a role in spermatogenesis (By similarity).</text>
</comment>
<comment type="catalytic activity">
    <reaction evidence="1">
        <text>S-ubiquitinyl-[E2 ubiquitin-conjugating enzyme]-L-cysteine + [acceptor protein]-L-lysine = [E2 ubiquitin-conjugating enzyme]-L-cysteine + N(6)-ubiquitinyl-[acceptor protein]-L-lysine.</text>
        <dbReference type="EC" id="2.3.2.27"/>
    </reaction>
</comment>
<comment type="pathway">
    <text evidence="1">Protein modification; protein ubiquitination.</text>
</comment>
<comment type="subunit">
    <text evidence="1">Interacts with CANX.</text>
</comment>
<comment type="subcellular location">
    <subcellularLocation>
        <location evidence="1">Endoplasmic reticulum membrane</location>
        <topology evidence="3">Single-pass type I membrane protein</topology>
    </subcellularLocation>
</comment>
<comment type="domain">
    <text evidence="1">The RING-type zinc finger is involved in CANX ubiquitination and degradation, but is not required for interaction with CANX.</text>
</comment>
<reference key="1">
    <citation type="submission" date="2005-06" db="EMBL/GenBank/DDBJ databases">
        <title>DNA sequences of macaque genes expressed in brain or testis and its evolutionary implications.</title>
        <authorList>
            <consortium name="International consortium for macaque cDNA sequencing and analysis"/>
        </authorList>
    </citation>
    <scope>NUCLEOTIDE SEQUENCE [LARGE SCALE MRNA]</scope>
    <source>
        <tissue>Testis</tissue>
    </source>
</reference>
<gene>
    <name type="primary">ZNRF4</name>
    <name evidence="6" type="ORF">QtsA-16853</name>
</gene>
<keyword id="KW-0256">Endoplasmic reticulum</keyword>
<keyword id="KW-0325">Glycoprotein</keyword>
<keyword id="KW-0472">Membrane</keyword>
<keyword id="KW-0479">Metal-binding</keyword>
<keyword id="KW-1185">Reference proteome</keyword>
<keyword id="KW-0732">Signal</keyword>
<keyword id="KW-0808">Transferase</keyword>
<keyword id="KW-0812">Transmembrane</keyword>
<keyword id="KW-1133">Transmembrane helix</keyword>
<keyword id="KW-0862">Zinc</keyword>
<keyword id="KW-0863">Zinc-finger</keyword>
<organism>
    <name type="scientific">Macaca fascicularis</name>
    <name type="common">Crab-eating macaque</name>
    <name type="synonym">Cynomolgus monkey</name>
    <dbReference type="NCBI Taxonomy" id="9541"/>
    <lineage>
        <taxon>Eukaryota</taxon>
        <taxon>Metazoa</taxon>
        <taxon>Chordata</taxon>
        <taxon>Craniata</taxon>
        <taxon>Vertebrata</taxon>
        <taxon>Euteleostomi</taxon>
        <taxon>Mammalia</taxon>
        <taxon>Eutheria</taxon>
        <taxon>Euarchontoglires</taxon>
        <taxon>Primates</taxon>
        <taxon>Haplorrhini</taxon>
        <taxon>Catarrhini</taxon>
        <taxon>Cercopithecidae</taxon>
        <taxon>Cercopithecinae</taxon>
        <taxon>Macaca</taxon>
    </lineage>
</organism>